<sequence>MDASHPAVYPVGVPPTAVDPPPRVRMKDYEGMPSTLGGLVLRSGQFACAVTALSIMISIPDFSSVTAFCYLVAAMALQLLWSVSLAVVDGYALLLRRTLHNPVLLSLLVIGDWVTSTLSLAAACSSAGITVLIDSDLAQCAHNHCGRYEAAVAMAFLTWFLVSLSFFFSFWLLATR</sequence>
<gene>
    <name type="ORF">SELMODRAFT_270224</name>
</gene>
<keyword id="KW-1003">Cell membrane</keyword>
<keyword id="KW-0472">Membrane</keyword>
<keyword id="KW-1185">Reference proteome</keyword>
<keyword id="KW-0812">Transmembrane</keyword>
<keyword id="KW-1133">Transmembrane helix</keyword>
<feature type="chain" id="PRO_0000418682" description="CASP-like protein 5A1">
    <location>
        <begin position="1"/>
        <end position="176"/>
    </location>
</feature>
<feature type="topological domain" description="Cytoplasmic" evidence="2">
    <location>
        <begin position="1"/>
        <end position="45"/>
    </location>
</feature>
<feature type="transmembrane region" description="Helical" evidence="2">
    <location>
        <begin position="46"/>
        <end position="66"/>
    </location>
</feature>
<feature type="topological domain" description="Extracellular" evidence="2">
    <location>
        <position position="67"/>
    </location>
</feature>
<feature type="transmembrane region" description="Helical" evidence="2">
    <location>
        <begin position="68"/>
        <end position="88"/>
    </location>
</feature>
<feature type="topological domain" description="Cytoplasmic" evidence="2">
    <location>
        <begin position="89"/>
        <end position="102"/>
    </location>
</feature>
<feature type="transmembrane region" description="Helical" evidence="2">
    <location>
        <begin position="103"/>
        <end position="123"/>
    </location>
</feature>
<feature type="topological domain" description="Extracellular" evidence="2">
    <location>
        <begin position="124"/>
        <end position="151"/>
    </location>
</feature>
<feature type="transmembrane region" description="Helical" evidence="2">
    <location>
        <begin position="152"/>
        <end position="172"/>
    </location>
</feature>
<feature type="topological domain" description="Cytoplasmic" evidence="2">
    <location>
        <begin position="173"/>
        <end position="176"/>
    </location>
</feature>
<dbReference type="EMBL" id="GL377565">
    <property type="protein sequence ID" value="EFJ38105.1"/>
    <property type="molecule type" value="Genomic_DNA"/>
</dbReference>
<dbReference type="EMBL" id="FE454478">
    <property type="status" value="NOT_ANNOTATED_CDS"/>
    <property type="molecule type" value="mRNA"/>
</dbReference>
<dbReference type="RefSeq" id="XP_002960566.1">
    <property type="nucleotide sequence ID" value="XM_002960520.1"/>
</dbReference>
<dbReference type="FunCoup" id="D8QNI1">
    <property type="interactions" value="1612"/>
</dbReference>
<dbReference type="STRING" id="88036.D8QNI1"/>
<dbReference type="EnsemblPlants" id="EFJ38105">
    <property type="protein sequence ID" value="EFJ38105"/>
    <property type="gene ID" value="SELMODRAFT_270224"/>
</dbReference>
<dbReference type="Gramene" id="EFJ38105">
    <property type="protein sequence ID" value="EFJ38105"/>
    <property type="gene ID" value="SELMODRAFT_270224"/>
</dbReference>
<dbReference type="KEGG" id="smo:SELMODRAFT_270224"/>
<dbReference type="eggNOG" id="ENOG502QTTS">
    <property type="taxonomic scope" value="Eukaryota"/>
</dbReference>
<dbReference type="HOGENOM" id="CLU_103961_1_0_1"/>
<dbReference type="InParanoid" id="D8QNI1"/>
<dbReference type="OMA" id="IAMPRHT"/>
<dbReference type="OrthoDB" id="828022at2759"/>
<dbReference type="Proteomes" id="UP000001514">
    <property type="component" value="Unassembled WGS sequence"/>
</dbReference>
<dbReference type="GO" id="GO:0016020">
    <property type="term" value="C:membrane"/>
    <property type="evidence" value="ECO:0000318"/>
    <property type="project" value="GO_Central"/>
</dbReference>
<dbReference type="GO" id="GO:0005886">
    <property type="term" value="C:plasma membrane"/>
    <property type="evidence" value="ECO:0007669"/>
    <property type="project" value="UniProtKB-SubCell"/>
</dbReference>
<dbReference type="InterPro" id="IPR006702">
    <property type="entry name" value="CASP_dom"/>
</dbReference>
<dbReference type="InterPro" id="IPR045009">
    <property type="entry name" value="CASPL-5"/>
</dbReference>
<dbReference type="PANTHER" id="PTHR32021:SF1">
    <property type="entry name" value="CASP-LIKE PROTEIN 5A1"/>
    <property type="match status" value="1"/>
</dbReference>
<dbReference type="PANTHER" id="PTHR32021">
    <property type="entry name" value="CASP-LIKE PROTEIN 5B3"/>
    <property type="match status" value="1"/>
</dbReference>
<dbReference type="Pfam" id="PF04535">
    <property type="entry name" value="CASP_dom"/>
    <property type="match status" value="1"/>
</dbReference>
<comment type="subunit">
    <text evidence="1">Homodimer and heterodimers.</text>
</comment>
<comment type="subcellular location">
    <subcellularLocation>
        <location evidence="1">Cell membrane</location>
        <topology evidence="1">Multi-pass membrane protein</topology>
    </subcellularLocation>
</comment>
<comment type="similarity">
    <text evidence="3">Belongs to the Casparian strip membrane proteins (CASP) family.</text>
</comment>
<proteinExistence type="evidence at transcript level"/>
<protein>
    <recommendedName>
        <fullName>CASP-like protein 5A1</fullName>
        <shortName>SmCASPL5A1</shortName>
    </recommendedName>
</protein>
<accession>D8QNI1</accession>
<name>CSPLH_SELML</name>
<organism>
    <name type="scientific">Selaginella moellendorffii</name>
    <name type="common">Spikemoss</name>
    <dbReference type="NCBI Taxonomy" id="88036"/>
    <lineage>
        <taxon>Eukaryota</taxon>
        <taxon>Viridiplantae</taxon>
        <taxon>Streptophyta</taxon>
        <taxon>Embryophyta</taxon>
        <taxon>Tracheophyta</taxon>
        <taxon>Lycopodiopsida</taxon>
        <taxon>Selaginellales</taxon>
        <taxon>Selaginellaceae</taxon>
        <taxon>Selaginella</taxon>
    </lineage>
</organism>
<reference key="1">
    <citation type="journal article" date="2011" name="Science">
        <title>The Selaginella genome identifies genetic changes associated with the evolution of vascular plants.</title>
        <authorList>
            <person name="Banks J.A."/>
            <person name="Nishiyama T."/>
            <person name="Hasebe M."/>
            <person name="Bowman J.L."/>
            <person name="Gribskov M."/>
            <person name="dePamphilis C."/>
            <person name="Albert V.A."/>
            <person name="Aono N."/>
            <person name="Aoyama T."/>
            <person name="Ambrose B.A."/>
            <person name="Ashton N.W."/>
            <person name="Axtell M.J."/>
            <person name="Barker E."/>
            <person name="Barker M.S."/>
            <person name="Bennetzen J.L."/>
            <person name="Bonawitz N.D."/>
            <person name="Chapple C."/>
            <person name="Cheng C."/>
            <person name="Correa L.G."/>
            <person name="Dacre M."/>
            <person name="DeBarry J."/>
            <person name="Dreyer I."/>
            <person name="Elias M."/>
            <person name="Engstrom E.M."/>
            <person name="Estelle M."/>
            <person name="Feng L."/>
            <person name="Finet C."/>
            <person name="Floyd S.K."/>
            <person name="Frommer W.B."/>
            <person name="Fujita T."/>
            <person name="Gramzow L."/>
            <person name="Gutensohn M."/>
            <person name="Harholt J."/>
            <person name="Hattori M."/>
            <person name="Heyl A."/>
            <person name="Hirai T."/>
            <person name="Hiwatashi Y."/>
            <person name="Ishikawa M."/>
            <person name="Iwata M."/>
            <person name="Karol K.G."/>
            <person name="Koehler B."/>
            <person name="Kolukisaoglu U."/>
            <person name="Kubo M."/>
            <person name="Kurata T."/>
            <person name="Lalonde S."/>
            <person name="Li K."/>
            <person name="Li Y."/>
            <person name="Litt A."/>
            <person name="Lyons E."/>
            <person name="Manning G."/>
            <person name="Maruyama T."/>
            <person name="Michael T.P."/>
            <person name="Mikami K."/>
            <person name="Miyazaki S."/>
            <person name="Morinaga S."/>
            <person name="Murata T."/>
            <person name="Mueller-Roeber B."/>
            <person name="Nelson D.R."/>
            <person name="Obara M."/>
            <person name="Oguri Y."/>
            <person name="Olmstead R.G."/>
            <person name="Onodera N."/>
            <person name="Petersen B.L."/>
            <person name="Pils B."/>
            <person name="Prigge M."/>
            <person name="Rensing S.A."/>
            <person name="Riano-Pachon D.M."/>
            <person name="Roberts A.W."/>
            <person name="Sato Y."/>
            <person name="Scheller H.V."/>
            <person name="Schulz B."/>
            <person name="Schulz C."/>
            <person name="Shakirov E.V."/>
            <person name="Shibagaki N."/>
            <person name="Shinohara N."/>
            <person name="Shippen D.E."/>
            <person name="Soerensen I."/>
            <person name="Sotooka R."/>
            <person name="Sugimoto N."/>
            <person name="Sugita M."/>
            <person name="Sumikawa N."/>
            <person name="Tanurdzic M."/>
            <person name="Theissen G."/>
            <person name="Ulvskov P."/>
            <person name="Wakazuki S."/>
            <person name="Weng J.K."/>
            <person name="Willats W.W."/>
            <person name="Wipf D."/>
            <person name="Wolf P.G."/>
            <person name="Yang L."/>
            <person name="Zimmer A.D."/>
            <person name="Zhu Q."/>
            <person name="Mitros T."/>
            <person name="Hellsten U."/>
            <person name="Loque D."/>
            <person name="Otillar R."/>
            <person name="Salamov A."/>
            <person name="Schmutz J."/>
            <person name="Shapiro H."/>
            <person name="Lindquist E."/>
            <person name="Lucas S."/>
            <person name="Rokhsar D."/>
            <person name="Grigoriev I.V."/>
        </authorList>
    </citation>
    <scope>NUCLEOTIDE SEQUENCE [LARGE SCALE GENOMIC DNA]</scope>
</reference>
<reference key="2">
    <citation type="submission" date="2008-03" db="EMBL/GenBank/DDBJ databases">
        <title>DOE Joint Genome Institute Selaginella moellendorffii EST project.</title>
        <authorList>
            <person name="Richardson P."/>
            <person name="Lucas S."/>
            <person name="Rokhsar D."/>
            <person name="Wang M."/>
            <person name="Lindquist E.A."/>
        </authorList>
    </citation>
    <scope>NUCLEOTIDE SEQUENCE [LARGE SCALE MRNA]</scope>
</reference>
<reference key="3">
    <citation type="journal article" date="2014" name="Plant Physiol.">
        <title>Functional and evolutionary analysis of the CASPARIAN STRIP MEMBRANE DOMAIN PROTEIN family.</title>
        <authorList>
            <person name="Roppolo D."/>
            <person name="Boeckmann B."/>
            <person name="Pfister A."/>
            <person name="Boutet E."/>
            <person name="Rubio M.C."/>
            <person name="Denervaud-Tendon V."/>
            <person name="Vermeer J.E."/>
            <person name="Gheyselinck J."/>
            <person name="Xenarios I."/>
            <person name="Geldner N."/>
        </authorList>
    </citation>
    <scope>GENE FAMILY</scope>
    <scope>NOMENCLATURE</scope>
</reference>
<evidence type="ECO:0000250" key="1"/>
<evidence type="ECO:0000255" key="2"/>
<evidence type="ECO:0000305" key="3"/>